<accession>V5BCL0</accession>
<accession>A1E348</accession>
<protein>
    <recommendedName>
        <fullName evidence="10">Perforin-like protein 1</fullName>
        <shortName evidence="10">TgPLP1</shortName>
    </recommendedName>
</protein>
<evidence type="ECO:0000250" key="1">
    <source>
        <dbReference type="UniProtKB" id="A1L314"/>
    </source>
</evidence>
<evidence type="ECO:0000255" key="2"/>
<evidence type="ECO:0000255" key="3">
    <source>
        <dbReference type="PROSITE-ProRule" id="PRU00498"/>
    </source>
</evidence>
<evidence type="ECO:0000255" key="4">
    <source>
        <dbReference type="PROSITE-ProRule" id="PRU00745"/>
    </source>
</evidence>
<evidence type="ECO:0000256" key="5">
    <source>
        <dbReference type="SAM" id="MobiDB-lite"/>
    </source>
</evidence>
<evidence type="ECO:0000269" key="6">
    <source>
    </source>
</evidence>
<evidence type="ECO:0000269" key="7">
    <source>
    </source>
</evidence>
<evidence type="ECO:0000269" key="8">
    <source>
    </source>
</evidence>
<evidence type="ECO:0000269" key="9">
    <source>
    </source>
</evidence>
<evidence type="ECO:0000303" key="10">
    <source>
    </source>
</evidence>
<evidence type="ECO:0000305" key="11"/>
<evidence type="ECO:0007744" key="12">
    <source>
        <dbReference type="PDB" id="5OUO"/>
    </source>
</evidence>
<evidence type="ECO:0007744" key="13">
    <source>
        <dbReference type="PDB" id="5OUP"/>
    </source>
</evidence>
<evidence type="ECO:0007744" key="14">
    <source>
        <dbReference type="PDB" id="5OUQ"/>
    </source>
</evidence>
<evidence type="ECO:0007744" key="15">
    <source>
        <dbReference type="PDB" id="5OWN"/>
    </source>
</evidence>
<evidence type="ECO:0007744" key="16">
    <source>
        <dbReference type="PDB" id="6D7A"/>
    </source>
</evidence>
<evidence type="ECO:0007829" key="17">
    <source>
        <dbReference type="PDB" id="5OUO"/>
    </source>
</evidence>
<evidence type="ECO:0007829" key="18">
    <source>
        <dbReference type="PDB" id="5OUP"/>
    </source>
</evidence>
<evidence type="ECO:0007829" key="19">
    <source>
        <dbReference type="PDB" id="5OWN"/>
    </source>
</evidence>
<organism>
    <name type="scientific">Toxoplasma gondii (strain ATCC 50861 / VEG)</name>
    <dbReference type="NCBI Taxonomy" id="432359"/>
    <lineage>
        <taxon>Eukaryota</taxon>
        <taxon>Sar</taxon>
        <taxon>Alveolata</taxon>
        <taxon>Apicomplexa</taxon>
        <taxon>Conoidasida</taxon>
        <taxon>Coccidia</taxon>
        <taxon>Eucoccidiorida</taxon>
        <taxon>Eimeriorina</taxon>
        <taxon>Sarcocystidae</taxon>
        <taxon>Toxoplasma</taxon>
    </lineage>
</organism>
<dbReference type="EMBL" id="AAYL02000114">
    <property type="protein sequence ID" value="ESS33165.1"/>
    <property type="molecule type" value="Genomic_DNA"/>
</dbReference>
<dbReference type="EMBL" id="EF102772">
    <property type="protein sequence ID" value="ABK97634.2"/>
    <property type="molecule type" value="mRNA"/>
</dbReference>
<dbReference type="PDB" id="5OUO">
    <property type="method" value="X-ray"/>
    <property type="resolution" value="1.11 A"/>
    <property type="chains" value="A=821-1085"/>
</dbReference>
<dbReference type="PDB" id="5OUP">
    <property type="method" value="X-ray"/>
    <property type="resolution" value="2.03 A"/>
    <property type="chains" value="A=473-816"/>
</dbReference>
<dbReference type="PDB" id="5OUQ">
    <property type="method" value="X-ray"/>
    <property type="resolution" value="5.11 A"/>
    <property type="chains" value="A/C/D/E/F/G=473-816"/>
</dbReference>
<dbReference type="PDB" id="5OWN">
    <property type="method" value="X-ray"/>
    <property type="resolution" value="3.11 A"/>
    <property type="chains" value="A/B=473-816"/>
</dbReference>
<dbReference type="PDB" id="6D7A">
    <property type="method" value="X-ray"/>
    <property type="resolution" value="1.13 A"/>
    <property type="chains" value="A/B=805-1161"/>
</dbReference>
<dbReference type="PDBsum" id="5OUO"/>
<dbReference type="PDBsum" id="5OUP"/>
<dbReference type="PDBsum" id="5OUQ"/>
<dbReference type="PDBsum" id="5OWN"/>
<dbReference type="PDBsum" id="6D7A"/>
<dbReference type="SMR" id="V5BCL0"/>
<dbReference type="STRING" id="432359.V5BCL0"/>
<dbReference type="iPTMnet" id="V5BCL0"/>
<dbReference type="PaxDb" id="5811-TGME49_004130"/>
<dbReference type="EnsemblProtists" id="ESS33165">
    <property type="protein sequence ID" value="ESS33165"/>
    <property type="gene ID" value="TGVEG_204130"/>
</dbReference>
<dbReference type="VEuPathDB" id="ToxoDB:TGARI_204130"/>
<dbReference type="VEuPathDB" id="ToxoDB:TGCAST_204130"/>
<dbReference type="VEuPathDB" id="ToxoDB:TGCOUG_204130"/>
<dbReference type="VEuPathDB" id="ToxoDB:TGDOM2_204130"/>
<dbReference type="VEuPathDB" id="ToxoDB:TGFOU_204130"/>
<dbReference type="VEuPathDB" id="ToxoDB:TGGT1_204130"/>
<dbReference type="VEuPathDB" id="ToxoDB:TGMAS_204130"/>
<dbReference type="VEuPathDB" id="ToxoDB:TGME49_204130"/>
<dbReference type="VEuPathDB" id="ToxoDB:TGP89_204130"/>
<dbReference type="VEuPathDB" id="ToxoDB:TGPRC2_204130"/>
<dbReference type="VEuPathDB" id="ToxoDB:TGRH88_034900"/>
<dbReference type="VEuPathDB" id="ToxoDB:TGRUB_204130"/>
<dbReference type="VEuPathDB" id="ToxoDB:TGVAND_204130"/>
<dbReference type="VEuPathDB" id="ToxoDB:TGVEG_204130"/>
<dbReference type="eggNOG" id="ENOG502S7UT">
    <property type="taxonomic scope" value="Eukaryota"/>
</dbReference>
<dbReference type="HOGENOM" id="CLU_290459_0_0_1"/>
<dbReference type="OMA" id="GRIYILC"/>
<dbReference type="OrthoDB" id="2044at5809"/>
<dbReference type="Proteomes" id="UP000002226">
    <property type="component" value="Partially assembled WGS sequence"/>
</dbReference>
<dbReference type="GO" id="GO:0031410">
    <property type="term" value="C:cytoplasmic vesicle"/>
    <property type="evidence" value="ECO:0007669"/>
    <property type="project" value="UniProtKB-KW"/>
</dbReference>
<dbReference type="GO" id="GO:0033163">
    <property type="term" value="C:microneme membrane"/>
    <property type="evidence" value="ECO:0000314"/>
    <property type="project" value="UniProtKB"/>
</dbReference>
<dbReference type="GO" id="GO:0020005">
    <property type="term" value="C:symbiont-containing vacuole membrane"/>
    <property type="evidence" value="ECO:0000314"/>
    <property type="project" value="UniProtKB"/>
</dbReference>
<dbReference type="GO" id="GO:0022829">
    <property type="term" value="F:wide pore channel activity"/>
    <property type="evidence" value="ECO:0000314"/>
    <property type="project" value="UniProtKB"/>
</dbReference>
<dbReference type="GO" id="GO:0035891">
    <property type="term" value="P:exit from host cell"/>
    <property type="evidence" value="ECO:0000314"/>
    <property type="project" value="UniProtKB"/>
</dbReference>
<dbReference type="GO" id="GO:0031640">
    <property type="term" value="P:killing of cells of another organism"/>
    <property type="evidence" value="ECO:0007669"/>
    <property type="project" value="UniProtKB-KW"/>
</dbReference>
<dbReference type="InterPro" id="IPR020864">
    <property type="entry name" value="MACPF"/>
</dbReference>
<dbReference type="Pfam" id="PF01823">
    <property type="entry name" value="MACPF"/>
    <property type="match status" value="1"/>
</dbReference>
<dbReference type="SMART" id="SM00457">
    <property type="entry name" value="MACPF"/>
    <property type="match status" value="1"/>
</dbReference>
<dbReference type="PROSITE" id="PS51412">
    <property type="entry name" value="MACPF_2"/>
    <property type="match status" value="1"/>
</dbReference>
<sequence length="1161" mass="125468">MFVVDLSLSGNMRSLTHGKSIHRSSIVVVTHCSHRLSLSPLNRPALFPSHSDRYTVPWRCRPSSWRLWITFVCLLTLHMFGLSSAVKRDGEVPTANLRASLSPDSSKEDAMLLSAIGGIGPTESRLQHIPFRTTRYLPIRSHVLQSTVERIESPEALNEVPTKVERNEFTEKGDKTEQVLTAQADHKSLLEGRSESTSTAPDDDFDFLFEDDTPKKPKSRVNKGTSSDETSPGDRSSGEGSSASDSLLSVVHRTKGNATQANKNQKRITHPKSKAQHQKKVTKKQGIPGSDSLGTSSADFDFDIDSSSNTQADDSQRQSLGDSSALDLFGSDTGDTGDIFGFSNSSSDGGNAAANDGGLFSSSGMGPTGASDETSANPLGSILGGVLNPFAQQQSITPMTDKADEWSKENMKAFEEKMPKKMRDDGSPDSWYKQAVPQESVADLNRMRENRRIAEENRAAAPLSAVYTKATKTVPAINYLGAGYDHVRGNPVGDPSSMGDPGIRPPVLRFTYAQNEDGVSNDLTVLQPLGGYVRQYVACRQSETISELSNLSDYQNELSVDASLQGGDPIGLNSFSASTGYRDFAKEVSKKDTRTYMLKNYCMRYEAGVAQSNHLKWNVTLAFAAGVSQLPDVFDAHNPECACSAEQWRQDQNAEACTKTNVPIWISFIEQFGTHFLVRLFAGGKMTYQVTAKRSEVEKMRNMGIDVKTQLKMQLGGVSGGAGQGTSSKKNQSSSEYQMNVQKETLVIGGRPPGNVSDPAALAAWADTVEELPMPVKFEVQPLYHLLPVEKQEAFKQAVTFYSKAVGLTPQDLSALTGVTRNLPKQLTQATQVAWSGPPPGFAKCPAGQVVILGFAMHLNFKEPGTDNFRIISCPPGREKCDGVGTASSETDEGRIYILCGEEPINEIQQVVAESPAHAGASVLEASCPDETVVVGGFGISVRGGSDGLDSFSIESCTTGQTICTKAPTRGSEKNFLWMMCVDKQYPGLRELVNVAELGSHGNANKRAVNSDGNVDVKCPANSSIVLGYVMEAHTNMQFVRDKFLQCPENASECKMTGKGVDHGMLWLFDRHALFGWIICKTVNEPAMHVATDVGKAKGNGKKKKGKKGKNKTNAPNEVEEGQQLGADSPSQVSVPADADSGPTSKTMSSLKLAPVKLLDL</sequence>
<reference key="1">
    <citation type="submission" date="2008-03" db="EMBL/GenBank/DDBJ databases">
        <title>Annotation of Toxoplasma gondii VEG.</title>
        <authorList>
            <person name="Lorenzi H."/>
            <person name="Inman J."/>
            <person name="Amedeo P."/>
            <person name="Brunk B."/>
            <person name="Roos D."/>
            <person name="Caler E."/>
        </authorList>
    </citation>
    <scope>NUCLEOTIDE SEQUENCE [LARGE SCALE GENOMIC DNA]</scope>
    <source>
        <strain>ATCC 50861 / VEG</strain>
    </source>
</reference>
<reference key="2">
    <citation type="journal article" date="2009" name="Science">
        <title>Rapid membrane disruption by a perforin-like protein facilitates parasite exit from host cells.</title>
        <authorList>
            <person name="Kafsack B.F."/>
            <person name="Pena J.D."/>
            <person name="Coppens I."/>
            <person name="Ravindran S."/>
            <person name="Boothroyd J.C."/>
            <person name="Carruthers V.B."/>
        </authorList>
    </citation>
    <scope>NUCLEOTIDE SEQUENCE [MRNA] OF 12-1161</scope>
    <scope>FUNCTION</scope>
    <scope>SUBCELLULAR LOCATION</scope>
    <scope>DISRUPTION PHENOTYPE</scope>
</reference>
<reference key="3">
    <citation type="journal article" date="2015" name="Exp. Parasitol.">
        <title>Identification and co-localization of perforin-like (TgPLP1) protein in Toxoplasma gondii bradyzoites.</title>
        <authorList>
            <person name="Shan D."/>
            <person name="Qian W."/>
            <person name="Liu J."/>
            <person name="Liu R."/>
            <person name="Liu Q."/>
        </authorList>
    </citation>
    <scope>SUBCELLULAR LOCATION</scope>
    <scope>DEVELOPMENTAL STAGE</scope>
</reference>
<reference evidence="16" key="4">
    <citation type="journal article" date="2018" name="PLoS Pathog.">
        <title>Structural basis of Toxoplasma gondii perforin-like protein 1 membrane interaction and activity during egress.</title>
        <authorList>
            <person name="Guerra A.J."/>
            <person name="Zhang O."/>
            <person name="Bahr C.M.E."/>
            <person name="Huynh M.H."/>
            <person name="DelProposto J."/>
            <person name="Brown W.C."/>
            <person name="Wawrzak Z."/>
            <person name="Koropatkin N.M."/>
            <person name="Carruthers V.B."/>
        </authorList>
    </citation>
    <scope>X-RAY CRYSTALLOGRAPHY (1.13 ANGSTROMS) OF 805-1161</scope>
    <scope>FUNCTION</scope>
    <scope>SUBUNIT</scope>
    <scope>DISULFIDE BONDS</scope>
    <scope>MUTAGENESIS OF 1065-MET--PHE-1069; 1066-LEU--LEU-1068; TRP-1067 AND LEU-1068</scope>
</reference>
<reference evidence="12 13" key="5">
    <citation type="journal article" date="2018" name="Sci. Adv.">
        <title>Structures of monomeric and oligomeric forms of the Toxoplasma gondii perforin-like protein 1.</title>
        <authorList>
            <person name="Ni T."/>
            <person name="Williams S.I."/>
            <person name="Rezelj S."/>
            <person name="Anderluh G."/>
            <person name="Harlos K."/>
            <person name="Stansfeld P.J."/>
            <person name="Gilbert R.J.C."/>
        </authorList>
    </citation>
    <scope>X-RAY CRYSTALLOGRAPHY (1.11 ANGSTROMS) OF 821-1085</scope>
    <scope>FUNCTION</scope>
    <scope>SUBUNIT</scope>
    <scope>DISULFIDE BONDS</scope>
    <scope>GLYCOSYLATION AT ASN-618</scope>
    <scope>MUTAGENESIS OF 1065-MET--LEU-1068</scope>
</reference>
<name>PLP1_TOXGV</name>
<keyword id="KW-0002">3D-structure</keyword>
<keyword id="KW-0204">Cytolysis</keyword>
<keyword id="KW-0968">Cytoplasmic vesicle</keyword>
<keyword id="KW-1015">Disulfide bond</keyword>
<keyword id="KW-0325">Glycoprotein</keyword>
<keyword id="KW-0472">Membrane</keyword>
<keyword id="KW-1185">Reference proteome</keyword>
<keyword id="KW-0812">Transmembrane</keyword>
<keyword id="KW-1134">Transmembrane beta strand</keyword>
<keyword id="KW-1133">Transmembrane helix</keyword>
<keyword id="KW-0843">Virulence</keyword>
<comment type="function">
    <text evidence="6 8 9">Pore-forming protein that promotes parasite exit from host cells: mediates formation of a pore in the parasitophorous vacuolar membrane, leading to membrane permeabilization, thereby facilitating parasite egress from host cells (PubMed:19095897, PubMed:29750191, PubMed:30513119). May also form a pore in the host plasma membrane (PubMed:19095897). Preferentially binds inner leaflet lipids, such as phosphatidylethanolamine (PE) or phosphatidylserine (PS) (PubMed:30513119).</text>
</comment>
<comment type="subunit">
    <text evidence="8 9">Homooligomer; forms a homooligomeric pore.</text>
</comment>
<comment type="subcellular location">
    <subcellularLocation>
        <location evidence="6">Parasitophorous vacuole membrane</location>
        <topology evidence="1">Multi-pass membrane protein</topology>
    </subcellularLocation>
    <subcellularLocation>
        <location evidence="6 7">Cytoplasmic vesicle</location>
        <location evidence="6 7">Secretory vesicle</location>
        <location evidence="6 7">Microneme membrane</location>
        <topology evidence="1">Multi-pass membrane protein</topology>
    </subcellularLocation>
</comment>
<comment type="developmental stage">
    <text evidence="7">Present in tachyzoites as well as in the slow-growing bradyzoites, which remain latent within the host.</text>
</comment>
<comment type="domain">
    <text evidence="1">The MACPF domain includes the central machinery of pore formation: acidification causes a significant structural rearrangement, leading to oligomerization and deployment of transmembrane beta-strands that enter the membrane as amphipathic beta-hairpins.</text>
</comment>
<comment type="disruption phenotype">
    <text evidence="6">Strongly reduced virulence without affecting growth in culture (PubMed:19095897). Parasites fail to exit normally, resulting in entrapment within host cells: defects are due to an inability to permeabilize the parasitophorous vacuole membrane and host plasma membrane during exit (PubMed:19095897).</text>
</comment>
<comment type="similarity">
    <text evidence="11">Belongs to the MPEG1 family.</text>
</comment>
<feature type="chain" id="PRO_0000459026" description="Perforin-like protein 1">
    <location>
        <begin position="1"/>
        <end position="1161"/>
    </location>
</feature>
<feature type="transmembrane region" description="Helical" evidence="2">
    <location>
        <begin position="67"/>
        <end position="86"/>
    </location>
</feature>
<feature type="transmembrane region" description="Beta stranded; Name=CH1" evidence="10">
    <location>
        <begin position="554"/>
        <end position="589"/>
    </location>
</feature>
<feature type="transmembrane region" description="Beta stranded; Name=CH2" evidence="10">
    <location>
        <begin position="694"/>
        <end position="740"/>
    </location>
</feature>
<feature type="domain" description="MACPF" evidence="4">
    <location>
        <begin position="463"/>
        <end position="817"/>
    </location>
</feature>
<feature type="region of interest" description="Disordered" evidence="5">
    <location>
        <begin position="154"/>
        <end position="329"/>
    </location>
</feature>
<feature type="region of interest" description="Disordered" evidence="5">
    <location>
        <begin position="353"/>
        <end position="381"/>
    </location>
</feature>
<feature type="region of interest" description="Disordered" evidence="5">
    <location>
        <begin position="716"/>
        <end position="736"/>
    </location>
</feature>
<feature type="region of interest" description="Disordered" evidence="5">
    <location>
        <begin position="1094"/>
        <end position="1149"/>
    </location>
</feature>
<feature type="compositionally biased region" description="Basic and acidic residues" evidence="5">
    <location>
        <begin position="162"/>
        <end position="177"/>
    </location>
</feature>
<feature type="compositionally biased region" description="Basic and acidic residues" evidence="5">
    <location>
        <begin position="184"/>
        <end position="194"/>
    </location>
</feature>
<feature type="compositionally biased region" description="Acidic residues" evidence="5">
    <location>
        <begin position="201"/>
        <end position="211"/>
    </location>
</feature>
<feature type="compositionally biased region" description="Polar residues" evidence="5">
    <location>
        <begin position="222"/>
        <end position="234"/>
    </location>
</feature>
<feature type="compositionally biased region" description="Low complexity" evidence="5">
    <location>
        <begin position="238"/>
        <end position="249"/>
    </location>
</feature>
<feature type="compositionally biased region" description="Basic residues" evidence="5">
    <location>
        <begin position="264"/>
        <end position="283"/>
    </location>
</feature>
<feature type="compositionally biased region" description="Polar residues" evidence="5">
    <location>
        <begin position="309"/>
        <end position="322"/>
    </location>
</feature>
<feature type="compositionally biased region" description="Polar residues" evidence="5">
    <location>
        <begin position="361"/>
        <end position="378"/>
    </location>
</feature>
<feature type="compositionally biased region" description="Basic residues" evidence="5">
    <location>
        <begin position="1099"/>
        <end position="1111"/>
    </location>
</feature>
<feature type="glycosylation site" description="N-linked (GlcNAc...) asparagine" evidence="3">
    <location>
        <position position="257"/>
    </location>
</feature>
<feature type="glycosylation site" description="N-linked (GlcNAc...) asparagine" evidence="3">
    <location>
        <position position="344"/>
    </location>
</feature>
<feature type="glycosylation site" description="N-linked (GlcNAc...) asparagine" evidence="3">
    <location>
        <position position="550"/>
    </location>
</feature>
<feature type="glycosylation site" description="N-linked (GlcNAc...) asparagine" evidence="3 8 13 15">
    <location>
        <position position="618"/>
    </location>
</feature>
<feature type="glycosylation site" description="N-linked (GlcNAc...) asparagine" evidence="3">
    <location>
        <position position="755"/>
    </location>
</feature>
<feature type="glycosylation site" description="N-linked (GlcNAc...) asparagine" evidence="3">
    <location>
        <position position="1022"/>
    </location>
</feature>
<feature type="glycosylation site" description="N-linked (GlcNAc...) asparagine" evidence="3">
    <location>
        <position position="1050"/>
    </location>
</feature>
<feature type="glycosylation site" description="N-linked (GlcNAc...) asparagine" evidence="3">
    <location>
        <position position="1111"/>
    </location>
</feature>
<feature type="disulfide bond" evidence="8 15">
    <location>
        <begin position="539"/>
        <end position="602"/>
    </location>
</feature>
<feature type="disulfide bond" description="Interchain" evidence="8 15">
    <location>
        <position position="641"/>
    </location>
</feature>
<feature type="disulfide bond" evidence="8 9 13 14 16">
    <location>
        <begin position="643"/>
        <end position="657"/>
    </location>
</feature>
<feature type="disulfide bond" evidence="8 9 12 16">
    <location>
        <begin position="845"/>
        <end position="900"/>
    </location>
</feature>
<feature type="disulfide bond" evidence="8 9 12 16">
    <location>
        <begin position="874"/>
        <end position="881"/>
    </location>
</feature>
<feature type="disulfide bond" evidence="8 9 12 16">
    <location>
        <begin position="928"/>
        <end position="981"/>
    </location>
</feature>
<feature type="disulfide bond" evidence="8 9 12 16">
    <location>
        <begin position="957"/>
        <end position="964"/>
    </location>
</feature>
<feature type="disulfide bond" evidence="8 9 12 16">
    <location>
        <begin position="1019"/>
        <end position="1080"/>
    </location>
</feature>
<feature type="disulfide bond" evidence="8 9 12 16">
    <location>
        <begin position="1047"/>
        <end position="1054"/>
    </location>
</feature>
<feature type="mutagenesis site" description="Reduced ability to promote parasite exit from host cells." evidence="9">
    <location>
        <begin position="1065"/>
        <end position="1069"/>
    </location>
</feature>
<feature type="mutagenesis site" description="Abolished ability to promote parasite exit from host cells." evidence="8">
    <original>MLWL</original>
    <variation>AAAA</variation>
    <location>
        <begin position="1065"/>
        <end position="1068"/>
    </location>
</feature>
<feature type="mutagenesis site" description="Reduced ability to promote parasite exit from host cells." evidence="9">
    <original>LWL</original>
    <variation>AWA</variation>
    <location>
        <begin position="1066"/>
        <end position="1068"/>
    </location>
</feature>
<feature type="mutagenesis site" description="Reduced ability to promote parasite exit from host cells." evidence="9">
    <original>W</original>
    <variation>A</variation>
    <location>
        <position position="1067"/>
    </location>
</feature>
<feature type="mutagenesis site" description="Does not affect ability to promote parasite exit from host cells." evidence="9">
    <original>L</original>
    <variation>V</variation>
    <location>
        <position position="1068"/>
    </location>
</feature>
<feature type="sequence conflict" description="In Ref. 2; ABK97634." evidence="11" ref="2">
    <original>R</original>
    <variation>G</variation>
    <location>
        <position position="53"/>
    </location>
</feature>
<feature type="sequence conflict" description="In Ref. 2; ABK97634." evidence="11" ref="2">
    <original>L</original>
    <variation>S</variation>
    <location>
        <position position="75"/>
    </location>
</feature>
<feature type="sequence conflict" description="In Ref. 2; ABK97634." evidence="11" ref="2">
    <original>L</original>
    <variation>P</variation>
    <location>
        <position position="113"/>
    </location>
</feature>
<feature type="sequence conflict" description="In Ref. 2; ABK97634." evidence="11" ref="2">
    <original>N</original>
    <variation>H</variation>
    <location>
        <position position="167"/>
    </location>
</feature>
<feature type="sequence conflict" description="In Ref. 2; ABK97634." evidence="11" ref="2">
    <original>A</original>
    <variation>D</variation>
    <location>
        <position position="243"/>
    </location>
</feature>
<feature type="sequence conflict" description="In Ref. 2; ABK97634." evidence="11" ref="2">
    <original>K</original>
    <variation>T</variation>
    <location>
        <position position="266"/>
    </location>
</feature>
<feature type="sequence conflict" description="In Ref. 2; ABK97634." evidence="11" ref="2">
    <original>L</original>
    <variation>F</variation>
    <location>
        <position position="615"/>
    </location>
</feature>
<feature type="sequence conflict" description="In Ref. 2; ABK97634." evidence="11" ref="2">
    <original>A</original>
    <variation>G</variation>
    <location>
        <position position="847"/>
    </location>
</feature>
<feature type="sequence conflict" description="In Ref. 2; ABK97634." evidence="11" ref="2">
    <original>K</original>
    <variation>R</variation>
    <location>
        <position position="1107"/>
    </location>
</feature>
<feature type="strand" evidence="18">
    <location>
        <begin position="482"/>
        <end position="484"/>
    </location>
</feature>
<feature type="turn" evidence="18">
    <location>
        <begin position="486"/>
        <end position="488"/>
    </location>
</feature>
<feature type="strand" evidence="18">
    <location>
        <begin position="497"/>
        <end position="499"/>
    </location>
</feature>
<feature type="strand" evidence="18">
    <location>
        <begin position="503"/>
        <end position="506"/>
    </location>
</feature>
<feature type="strand" evidence="18">
    <location>
        <begin position="531"/>
        <end position="548"/>
    </location>
</feature>
<feature type="helix" evidence="18">
    <location>
        <begin position="551"/>
        <end position="559"/>
    </location>
</feature>
<feature type="strand" evidence="18">
    <location>
        <begin position="562"/>
        <end position="564"/>
    </location>
</feature>
<feature type="turn" evidence="18">
    <location>
        <begin position="574"/>
        <end position="577"/>
    </location>
</feature>
<feature type="helix" evidence="18">
    <location>
        <begin position="579"/>
        <end position="589"/>
    </location>
</feature>
<feature type="strand" evidence="18">
    <location>
        <begin position="593"/>
        <end position="609"/>
    </location>
</feature>
<feature type="helix" evidence="18">
    <location>
        <begin position="621"/>
        <end position="628"/>
    </location>
</feature>
<feature type="helix" evidence="18">
    <location>
        <begin position="635"/>
        <end position="637"/>
    </location>
</feature>
<feature type="strand" evidence="19">
    <location>
        <begin position="638"/>
        <end position="640"/>
    </location>
</feature>
<feature type="helix" evidence="18">
    <location>
        <begin position="645"/>
        <end position="650"/>
    </location>
</feature>
<feature type="helix" evidence="18">
    <location>
        <begin position="655"/>
        <end position="658"/>
    </location>
</feature>
<feature type="helix" evidence="18">
    <location>
        <begin position="662"/>
        <end position="672"/>
    </location>
</feature>
<feature type="strand" evidence="18">
    <location>
        <begin position="674"/>
        <end position="693"/>
    </location>
</feature>
<feature type="helix" evidence="19">
    <location>
        <begin position="694"/>
        <end position="703"/>
    </location>
</feature>
<feature type="helix" evidence="19">
    <location>
        <begin position="707"/>
        <end position="714"/>
    </location>
</feature>
<feature type="strand" evidence="18">
    <location>
        <begin position="741"/>
        <end position="751"/>
    </location>
</feature>
<feature type="strand" evidence="19">
    <location>
        <begin position="754"/>
        <end position="757"/>
    </location>
</feature>
<feature type="helix" evidence="18">
    <location>
        <begin position="759"/>
        <end position="771"/>
    </location>
</feature>
<feature type="strand" evidence="18">
    <location>
        <begin position="774"/>
        <end position="782"/>
    </location>
</feature>
<feature type="helix" evidence="18">
    <location>
        <begin position="783"/>
        <end position="786"/>
    </location>
</feature>
<feature type="helix" evidence="18">
    <location>
        <begin position="789"/>
        <end position="806"/>
    </location>
</feature>
<feature type="helix" evidence="17">
    <location>
        <begin position="823"/>
        <end position="829"/>
    </location>
</feature>
<feature type="strand" evidence="17">
    <location>
        <begin position="830"/>
        <end position="840"/>
    </location>
</feature>
<feature type="strand" evidence="17">
    <location>
        <begin position="842"/>
        <end position="844"/>
    </location>
</feature>
<feature type="strand" evidence="17">
    <location>
        <begin position="850"/>
        <end position="859"/>
    </location>
</feature>
<feature type="strand" evidence="17">
    <location>
        <begin position="861"/>
        <end position="866"/>
    </location>
</feature>
<feature type="strand" evidence="17">
    <location>
        <begin position="870"/>
        <end position="873"/>
    </location>
</feature>
<feature type="strand" evidence="17">
    <location>
        <begin position="879"/>
        <end position="882"/>
    </location>
</feature>
<feature type="strand" evidence="17">
    <location>
        <begin position="893"/>
        <end position="903"/>
    </location>
</feature>
<feature type="strand" evidence="17">
    <location>
        <begin position="908"/>
        <end position="914"/>
    </location>
</feature>
<feature type="strand" evidence="17">
    <location>
        <begin position="924"/>
        <end position="927"/>
    </location>
</feature>
<feature type="strand" evidence="17">
    <location>
        <begin position="932"/>
        <end position="942"/>
    </location>
</feature>
<feature type="helix" evidence="17">
    <location>
        <begin position="948"/>
        <end position="951"/>
    </location>
</feature>
<feature type="strand" evidence="17">
    <location>
        <begin position="953"/>
        <end position="956"/>
    </location>
</feature>
<feature type="strand" evidence="17">
    <location>
        <begin position="962"/>
        <end position="966"/>
    </location>
</feature>
<feature type="strand" evidence="17">
    <location>
        <begin position="974"/>
        <end position="983"/>
    </location>
</feature>
<feature type="helix" evidence="17">
    <location>
        <begin position="989"/>
        <end position="991"/>
    </location>
</feature>
<feature type="strand" evidence="17">
    <location>
        <begin position="992"/>
        <end position="1003"/>
    </location>
</feature>
<feature type="strand" evidence="17">
    <location>
        <begin position="1014"/>
        <end position="1018"/>
    </location>
</feature>
<feature type="strand" evidence="17">
    <location>
        <begin position="1023"/>
        <end position="1034"/>
    </location>
</feature>
<feature type="helix" evidence="17">
    <location>
        <begin position="1037"/>
        <end position="1039"/>
    </location>
</feature>
<feature type="strand" evidence="17">
    <location>
        <begin position="1043"/>
        <end position="1046"/>
    </location>
</feature>
<feature type="strand" evidence="17">
    <location>
        <begin position="1052"/>
        <end position="1057"/>
    </location>
</feature>
<feature type="strand" evidence="17">
    <location>
        <begin position="1071"/>
        <end position="1082"/>
    </location>
</feature>
<proteinExistence type="evidence at protein level"/>
<gene>
    <name evidence="10" type="primary">PLP1</name>
    <name type="ORF">TGVEG_204130</name>
</gene>